<feature type="peptide" id="PRO_0000366082" description="Alpha-conotoxin-like Vn">
    <location>
        <begin position="1"/>
        <end position="17"/>
    </location>
</feature>
<feature type="region of interest" description="Ser-Xaa-Pro motif, crucial for potent interaction with nAChR" evidence="2">
    <location>
        <begin position="5"/>
        <end position="7"/>
    </location>
</feature>
<feature type="modified residue" description="Cysteine amide" evidence="3">
    <location>
        <position position="17"/>
    </location>
</feature>
<feature type="disulfide bond" evidence="2">
    <location>
        <begin position="3"/>
        <end position="9"/>
    </location>
</feature>
<feature type="disulfide bond" evidence="2">
    <location>
        <begin position="4"/>
        <end position="17"/>
    </location>
</feature>
<accession>P0C8V4</accession>
<protein>
    <recommendedName>
        <fullName evidence="4">Alpha-conotoxin-like Vn</fullName>
    </recommendedName>
    <alternativeName>
        <fullName evidence="5">Vn1A</fullName>
    </alternativeName>
</protein>
<reference key="1">
    <citation type="journal article" date="2008" name="J. Sep. Sci.">
        <title>Conus ventricosus venom peptides profiling by HPLC-MS: a new insight in the intraspecific variation.</title>
        <authorList>
            <person name="Romeo C."/>
            <person name="Di Francesco L."/>
            <person name="Oliverio M."/>
            <person name="Palazzo P."/>
            <person name="Massilia G.R."/>
            <person name="Ascenzi P."/>
            <person name="Polticelli F."/>
            <person name="Schinina M.E."/>
        </authorList>
    </citation>
    <scope>PROTEIN SEQUENCE</scope>
    <scope>AMIDATION AT CYS-17</scope>
    <scope>SUBCELLULAR LOCATION</scope>
    <source>
        <tissue>Venom</tissue>
    </source>
</reference>
<comment type="function">
    <text evidence="1">Alpha-conotoxins act on postsynaptic membranes, they bind to the nicotinic acetylcholine receptors (nAChR) and thus inhibit them.</text>
</comment>
<comment type="subcellular location">
    <subcellularLocation>
        <location evidence="3">Secreted</location>
    </subcellularLocation>
</comment>
<comment type="tissue specificity">
    <text evidence="6">Expressed by the venom duct.</text>
</comment>
<comment type="domain">
    <text evidence="5">The cysteine framework is I (CC-C-C). Alpha4/7 pattern.</text>
</comment>
<comment type="similarity">
    <text evidence="5">Belongs to the conotoxin A superfamily.</text>
</comment>
<keyword id="KW-0008">Acetylcholine receptor inhibiting toxin</keyword>
<keyword id="KW-0027">Amidation</keyword>
<keyword id="KW-0903">Direct protein sequencing</keyword>
<keyword id="KW-1015">Disulfide bond</keyword>
<keyword id="KW-0872">Ion channel impairing toxin</keyword>
<keyword id="KW-0528">Neurotoxin</keyword>
<keyword id="KW-0629">Postsynaptic neurotoxin</keyword>
<keyword id="KW-0964">Secreted</keyword>
<keyword id="KW-0800">Toxin</keyword>
<dbReference type="ConoServer" id="3712">
    <property type="toxin name" value="Vn1A"/>
</dbReference>
<dbReference type="GO" id="GO:0005576">
    <property type="term" value="C:extracellular region"/>
    <property type="evidence" value="ECO:0007669"/>
    <property type="project" value="UniProtKB-SubCell"/>
</dbReference>
<dbReference type="GO" id="GO:0035792">
    <property type="term" value="C:host cell postsynaptic membrane"/>
    <property type="evidence" value="ECO:0007669"/>
    <property type="project" value="UniProtKB-KW"/>
</dbReference>
<dbReference type="GO" id="GO:0030550">
    <property type="term" value="F:acetylcholine receptor inhibitor activity"/>
    <property type="evidence" value="ECO:0007669"/>
    <property type="project" value="UniProtKB-KW"/>
</dbReference>
<dbReference type="GO" id="GO:0099106">
    <property type="term" value="F:ion channel regulator activity"/>
    <property type="evidence" value="ECO:0007669"/>
    <property type="project" value="UniProtKB-KW"/>
</dbReference>
<dbReference type="GO" id="GO:0090729">
    <property type="term" value="F:toxin activity"/>
    <property type="evidence" value="ECO:0007669"/>
    <property type="project" value="UniProtKB-KW"/>
</dbReference>
<evidence type="ECO:0000250" key="1"/>
<evidence type="ECO:0000250" key="2">
    <source>
        <dbReference type="UniProtKB" id="P56636"/>
    </source>
</evidence>
<evidence type="ECO:0000269" key="3">
    <source>
    </source>
</evidence>
<evidence type="ECO:0000303" key="4">
    <source>
    </source>
</evidence>
<evidence type="ECO:0000305" key="5"/>
<evidence type="ECO:0000305" key="6">
    <source>
    </source>
</evidence>
<organism>
    <name type="scientific">Conus ventricosus</name>
    <name type="common">Mediterranean cone</name>
    <dbReference type="NCBI Taxonomy" id="117992"/>
    <lineage>
        <taxon>Eukaryota</taxon>
        <taxon>Metazoa</taxon>
        <taxon>Spiralia</taxon>
        <taxon>Lophotrochozoa</taxon>
        <taxon>Mollusca</taxon>
        <taxon>Gastropoda</taxon>
        <taxon>Caenogastropoda</taxon>
        <taxon>Neogastropoda</taxon>
        <taxon>Conoidea</taxon>
        <taxon>Conidae</taxon>
        <taxon>Conus</taxon>
        <taxon>Lautoconus</taxon>
    </lineage>
</organism>
<sequence>GGCCSYPPCAVSNPQHC</sequence>
<proteinExistence type="evidence at protein level"/>
<name>CA1A_CONVE</name>